<proteinExistence type="evidence at protein level"/>
<accession>P07396</accession>
<accession>Q76ZW4</accession>
<organism>
    <name type="scientific">Vaccinia virus (strain Western Reserve)</name>
    <name type="common">VACV</name>
    <name type="synonym">Vaccinia virus (strain WR)</name>
    <dbReference type="NCBI Taxonomy" id="10254"/>
    <lineage>
        <taxon>Viruses</taxon>
        <taxon>Varidnaviria</taxon>
        <taxon>Bamfordvirae</taxon>
        <taxon>Nucleocytoviricota</taxon>
        <taxon>Pokkesviricetes</taxon>
        <taxon>Chitovirales</taxon>
        <taxon>Poxviridae</taxon>
        <taxon>Chordopoxvirinae</taxon>
        <taxon>Orthopoxvirus</taxon>
        <taxon>Vaccinia virus</taxon>
    </lineage>
</organism>
<keyword id="KW-0238">DNA-binding</keyword>
<keyword id="KW-0945">Host-virus interaction</keyword>
<keyword id="KW-1090">Inhibition of host innate immune response by virus</keyword>
<keyword id="KW-0426">Late protein</keyword>
<keyword id="KW-0597">Phosphoprotein</keyword>
<keyword id="KW-1185">Reference proteome</keyword>
<keyword id="KW-0899">Viral immunoevasion</keyword>
<keyword id="KW-0946">Virion</keyword>
<organismHost>
    <name type="scientific">Bos taurus</name>
    <name type="common">Bovine</name>
    <dbReference type="NCBI Taxonomy" id="9913"/>
</organismHost>
<sequence length="101" mass="11435">MNSHFASAHTPFYINTKEGRYLVLKAVKVCDVRTVECEGSKASCVLKVDKPSSPACERRPSSPSRCERMNNPRKQVPFMRTDMLQNMFAANRDNVASRLLN</sequence>
<feature type="chain" id="PRO_0000099521" description="Phosphoprotein OPG062">
    <location>
        <begin position="1"/>
        <end position="101"/>
    </location>
</feature>
<feature type="region of interest" description="Disordered" evidence="1">
    <location>
        <begin position="51"/>
        <end position="73"/>
    </location>
</feature>
<feature type="compositionally biased region" description="Basic and acidic residues" evidence="1">
    <location>
        <begin position="56"/>
        <end position="70"/>
    </location>
</feature>
<feature type="modified residue" description="Phosphoserine" evidence="2">
    <location>
        <position position="53"/>
    </location>
</feature>
<feature type="modified residue" description="Phosphoserine" evidence="2">
    <location>
        <position position="62"/>
    </location>
</feature>
<feature type="mutagenesis site" description="About 50% loss of phosphorylation." evidence="2">
    <original>S</original>
    <variation>A</variation>
    <location>
        <position position="53"/>
    </location>
</feature>
<feature type="mutagenesis site" description="Complete loss of phosphorylation and about 90% loss of binding with host RICTOR and RPTOR; when associated with A-62." evidence="2 4">
    <original>S</original>
    <variation>A</variation>
    <location>
        <position position="53"/>
    </location>
</feature>
<feature type="mutagenesis site" description="About 50% loss of phosphorylation." evidence="2">
    <original>S</original>
    <variation>A</variation>
    <location>
        <position position="62"/>
    </location>
</feature>
<feature type="mutagenesis site" description="Complete loss of phosphorylation and about 90% loss of binding with host RICTOR and RPTOR; when associated with A-53." evidence="2 4">
    <original>S</original>
    <variation>A</variation>
    <location>
        <position position="62"/>
    </location>
</feature>
<feature type="sequence conflict" description="In Ref. 2; AAO89335." evidence="5" ref="2">
    <original>R</original>
    <variation>G</variation>
    <location>
        <position position="73"/>
    </location>
</feature>
<comment type="function">
    <text evidence="2 4">Plays an essential role in virion assembly and morphogenesis (PubMed:20392848). Also plays a role in the inhibition of host immune response by dysregulating mTOR. Sequesters host RICTOR and RPTOR, thereby disrupting mTORC1 and mTORC2 crosstalk. In turn, blocks the host antiviral response in part through mTOR-dependent degradation of cGAS, the primary poxvirus sensor (PubMed:30078703).</text>
</comment>
<comment type="subunit">
    <text evidence="2 4">Self-associates to form high molecular-weight forms (PubMed:20392848). Interacts with protein OPG157/A30 (PubMed:20392848). Interacts with host RICTOR and RPTOR; these interactions disrupt the mTORC1 and mTORC2 crosstalk (PubMed:30078703).</text>
</comment>
<comment type="subcellular location">
    <subcellularLocation>
        <location evidence="6">Virion</location>
    </subcellularLocation>
    <text evidence="5">Major component of the virion comprising about 10% of the virion mass.</text>
</comment>
<comment type="induction">
    <text evidence="3">Expressed in the late phase of the viral replicative cycle.</text>
</comment>
<comment type="PTM">
    <text evidence="2 4">Phosphorylated on two serines. While these phosphorylations do not play a role in virion assembly; they are essential for the interaction with host RICTOR and RPTOR.</text>
</comment>
<comment type="miscellaneous">
    <text evidence="2">Originally annotated as the product of the F18R open reading frame (protein F18), it is now referred as protein F17 since there are only 17 open reading frames in the HindIII fragment.</text>
</comment>
<comment type="similarity">
    <text evidence="5">Belongs to the orthopoxvirus OPG062 family.</text>
</comment>
<gene>
    <name type="primary">OPG062</name>
    <name type="ordered locus">VACWR056</name>
    <name type="ORF">F17R</name>
</gene>
<name>PG062_VACCW</name>
<reference key="1">
    <citation type="journal article" date="1985" name="Proc. Natl. Acad. Sci. U.S.A.">
        <title>One hundred base pairs of 5' flanking sequence of a vaccinia virus late gene are sufficient to temporally regulate late transcription.</title>
        <authorList>
            <person name="Bertholet C."/>
            <person name="Drillien R."/>
            <person name="Wittek R."/>
        </authorList>
    </citation>
    <scope>NUCLEOTIDE SEQUENCE [GENOMIC DNA]</scope>
</reference>
<reference key="2">
    <citation type="submission" date="2003-02" db="EMBL/GenBank/DDBJ databases">
        <title>Sequencing of the coding region of Vaccinia-WR to an average 9-fold redundancy and an error rate of 0.16/10kb.</title>
        <authorList>
            <person name="Esposito J.J."/>
            <person name="Frace A.M."/>
            <person name="Sammons S.A."/>
            <person name="Olsen-Rasmussen M."/>
            <person name="Osborne J."/>
            <person name="Wohlhueter R."/>
        </authorList>
    </citation>
    <scope>NUCLEOTIDE SEQUENCE [LARGE SCALE GENOMIC DNA]</scope>
</reference>
<reference key="3">
    <citation type="journal article" date="1991" name="J. Virol.">
        <title>Vaccinia virus morphogenesis is interrupted when expression of the gene encoding an 11-kilodalton phosphorylated protein is prevented by the Escherichia coli lac repressor.</title>
        <authorList>
            <person name="Zhang Y."/>
            <person name="Moss B."/>
        </authorList>
    </citation>
    <scope>CHARACTERIZATION</scope>
</reference>
<reference key="4">
    <citation type="journal article" date="2006" name="Adv. Virus Res.">
        <title>In a nutshell: structure and assembly of the vaccinia virion.</title>
        <authorList>
            <person name="Condit R.C."/>
            <person name="Moussatche N."/>
            <person name="Traktman P."/>
        </authorList>
    </citation>
    <scope>REVIEW</scope>
    <scope>SUBCELLULAR LOCATION</scope>
</reference>
<reference key="5">
    <citation type="journal article" date="2010" name="J. Virol.">
        <title>Structure/Function analysis of the vaccinia virus F18 phosphoprotein, an abundant core component required for virion maturation and infectivity.</title>
        <authorList>
            <person name="Wickramasekera N.T."/>
            <person name="Traktman P."/>
        </authorList>
    </citation>
    <scope>FUNCTION</scope>
    <scope>SUBUNIT</scope>
    <scope>INTERACTION WITH PROTEIN OPG157/A30</scope>
    <scope>PHOSPHORYLATION AT SER-53 AND SER-62</scope>
    <scope>MUTAGENESIS OF SER-53 AND SER-62</scope>
</reference>
<reference key="6">
    <citation type="journal article" date="2018" name="Cell">
        <title>Poxviruses Evade Cytosolic Sensing through Disruption of an mTORC1-mTORC2 Regulatory Circuit.</title>
        <authorList>
            <person name="Meade N."/>
            <person name="Furey C."/>
            <person name="Li H."/>
            <person name="Verma R."/>
            <person name="Chai Q."/>
            <person name="Rollins M.G."/>
            <person name="DiGiuseppe S."/>
            <person name="Naghavi M.H."/>
            <person name="Walsh D."/>
        </authorList>
    </citation>
    <scope>FUNCTION</scope>
    <scope>INTERACTION WITH HOST RICTOR AND RPTOR</scope>
    <scope>MUTAGENESIS OF SER-53 AND SER-62</scope>
</reference>
<reference key="7">
    <citation type="journal article" date="2015" name="J. Virol.">
        <title>Deciphering poxvirus gene expression by RNA sequencing and ribosome profiling.</title>
        <authorList>
            <person name="Yang Z."/>
            <person name="Cao S."/>
            <person name="Martens C.A."/>
            <person name="Porcella S.F."/>
            <person name="Xie Z."/>
            <person name="Ma M."/>
            <person name="Shen B."/>
            <person name="Moss B."/>
        </authorList>
    </citation>
    <scope>INDUCTION</scope>
</reference>
<evidence type="ECO:0000256" key="1">
    <source>
        <dbReference type="SAM" id="MobiDB-lite"/>
    </source>
</evidence>
<evidence type="ECO:0000269" key="2">
    <source>
    </source>
</evidence>
<evidence type="ECO:0000269" key="3">
    <source>
    </source>
</evidence>
<evidence type="ECO:0000269" key="4">
    <source>
    </source>
</evidence>
<evidence type="ECO:0000305" key="5"/>
<evidence type="ECO:0000305" key="6">
    <source>
    </source>
</evidence>
<dbReference type="EMBL" id="M11107">
    <property type="protein sequence ID" value="AAA48278.1"/>
    <property type="molecule type" value="Genomic_DNA"/>
</dbReference>
<dbReference type="EMBL" id="AY243312">
    <property type="protein sequence ID" value="AAO89335.1"/>
    <property type="molecule type" value="Genomic_DNA"/>
</dbReference>
<dbReference type="PIR" id="A22955">
    <property type="entry name" value="WMVZ11"/>
</dbReference>
<dbReference type="iPTMnet" id="P07396"/>
<dbReference type="KEGG" id="vg:3707513"/>
<dbReference type="Proteomes" id="UP000000344">
    <property type="component" value="Genome"/>
</dbReference>
<dbReference type="GO" id="GO:0030430">
    <property type="term" value="C:host cell cytoplasm"/>
    <property type="evidence" value="ECO:0000314"/>
    <property type="project" value="UniProt"/>
</dbReference>
<dbReference type="GO" id="GO:0044423">
    <property type="term" value="C:virion component"/>
    <property type="evidence" value="ECO:0007669"/>
    <property type="project" value="UniProtKB-KW"/>
</dbReference>
<dbReference type="GO" id="GO:0003677">
    <property type="term" value="F:DNA binding"/>
    <property type="evidence" value="ECO:0007669"/>
    <property type="project" value="UniProtKB-KW"/>
</dbReference>
<dbReference type="GO" id="GO:0140313">
    <property type="term" value="F:molecular sequestering activity"/>
    <property type="evidence" value="ECO:0000314"/>
    <property type="project" value="UniProt"/>
</dbReference>
<dbReference type="GO" id="GO:0052170">
    <property type="term" value="P:symbiont-mediated suppression of host innate immune response"/>
    <property type="evidence" value="ECO:0000314"/>
    <property type="project" value="UniProtKB"/>
</dbReference>
<dbReference type="GO" id="GO:0039502">
    <property type="term" value="P:symbiont-mediated suppression of host type I interferon-mediated signaling pathway"/>
    <property type="evidence" value="ECO:0000314"/>
    <property type="project" value="UniProt"/>
</dbReference>
<dbReference type="GO" id="GO:0019082">
    <property type="term" value="P:viral protein processing"/>
    <property type="evidence" value="ECO:0007669"/>
    <property type="project" value="InterPro"/>
</dbReference>
<dbReference type="InterPro" id="IPR006854">
    <property type="entry name" value="Phosphoprotein_F17"/>
</dbReference>
<dbReference type="Pfam" id="PF04767">
    <property type="entry name" value="Pox_F17"/>
    <property type="match status" value="1"/>
</dbReference>
<dbReference type="PIRSF" id="PIRSF003688">
    <property type="entry name" value="VAC_PP"/>
    <property type="match status" value="1"/>
</dbReference>
<protein>
    <recommendedName>
        <fullName>Phosphoprotein OPG062</fullName>
    </recommendedName>
    <alternativeName>
        <fullName>Phosphoprotein F17</fullName>
    </alternativeName>
</protein>